<evidence type="ECO:0000250" key="1">
    <source>
        <dbReference type="UniProtKB" id="Q1PSW8"/>
    </source>
</evidence>
<evidence type="ECO:0000250" key="2">
    <source>
        <dbReference type="UniProtKB" id="Q2Q1W2"/>
    </source>
</evidence>
<evidence type="ECO:0000255" key="3"/>
<evidence type="ECO:0000255" key="4">
    <source>
        <dbReference type="PROSITE-ProRule" id="PRU00024"/>
    </source>
</evidence>
<evidence type="ECO:0000255" key="5">
    <source>
        <dbReference type="PROSITE-ProRule" id="PRU00175"/>
    </source>
</evidence>
<evidence type="ECO:0000256" key="6">
    <source>
        <dbReference type="SAM" id="MobiDB-lite"/>
    </source>
</evidence>
<evidence type="ECO:0000305" key="7"/>
<comment type="function">
    <text evidence="1">E3 ubiquitin-protein ligase that cooperates with the microRNAs (miRNAs) machinery and promotes embryonic stem cells proliferation and maintenance. Binds to miRNAs and participates in post-transcriptional repression of transcripts. Required to maintain proliferation and prevent premature differentiation of neural progenitor cells during early neural development.</text>
</comment>
<comment type="catalytic activity">
    <reaction>
        <text>S-ubiquitinyl-[E2 ubiquitin-conjugating enzyme]-L-cysteine + [acceptor protein]-L-lysine = [E2 ubiquitin-conjugating enzyme]-L-cysteine + N(6)-ubiquitinyl-[acceptor protein]-L-lysine.</text>
        <dbReference type="EC" id="2.3.2.27"/>
    </reaction>
</comment>
<comment type="pathway">
    <text>Protein modification; protein ubiquitination.</text>
</comment>
<comment type="subcellular location">
    <subcellularLocation>
        <location evidence="2">Cytoplasm</location>
        <location evidence="2">P-body</location>
    </subcellularLocation>
</comment>
<comment type="domain">
    <text evidence="2">The NHL domain, containing the 6 NHL repeats, is necessary and sufficient to target RNA but not to repress mRNA. The minimal region needed to execute repression consists of the coiled coil domain and the Filamin repeat. The RING-type domain is dispensable for mRNA repression.</text>
</comment>
<comment type="similarity">
    <text evidence="7">Belongs to the TRIM/RBCC family.</text>
</comment>
<gene>
    <name type="primary">trim71</name>
    <name type="synonym">lin41</name>
</gene>
<dbReference type="EC" id="2.3.2.27"/>
<dbReference type="EMBL" id="AAMC01073953">
    <property type="status" value="NOT_ANNOTATED_CDS"/>
    <property type="molecule type" value="Genomic_DNA"/>
</dbReference>
<dbReference type="EMBL" id="AAMC01073954">
    <property type="status" value="NOT_ANNOTATED_CDS"/>
    <property type="molecule type" value="Genomic_DNA"/>
</dbReference>
<dbReference type="EMBL" id="AAMC01073955">
    <property type="status" value="NOT_ANNOTATED_CDS"/>
    <property type="molecule type" value="Genomic_DNA"/>
</dbReference>
<dbReference type="EMBL" id="AAMC01073956">
    <property type="status" value="NOT_ANNOTATED_CDS"/>
    <property type="molecule type" value="Genomic_DNA"/>
</dbReference>
<dbReference type="EMBL" id="AAMC01073957">
    <property type="status" value="NOT_ANNOTATED_CDS"/>
    <property type="molecule type" value="Genomic_DNA"/>
</dbReference>
<dbReference type="SMR" id="F6QEU4"/>
<dbReference type="FunCoup" id="F6QEU4">
    <property type="interactions" value="406"/>
</dbReference>
<dbReference type="STRING" id="8364.ENSXETP00000002947"/>
<dbReference type="PaxDb" id="8364-ENSXETP00000011768"/>
<dbReference type="eggNOG" id="KOG2177">
    <property type="taxonomic scope" value="Eukaryota"/>
</dbReference>
<dbReference type="HOGENOM" id="CLU_008645_4_1_1"/>
<dbReference type="InParanoid" id="F6QEU4"/>
<dbReference type="TreeFam" id="TF331018"/>
<dbReference type="UniPathway" id="UPA00143"/>
<dbReference type="Proteomes" id="UP000008143">
    <property type="component" value="Unplaced"/>
</dbReference>
<dbReference type="GO" id="GO:0000932">
    <property type="term" value="C:P-body"/>
    <property type="evidence" value="ECO:0000250"/>
    <property type="project" value="UniProtKB"/>
</dbReference>
<dbReference type="GO" id="GO:0035198">
    <property type="term" value="F:miRNA binding"/>
    <property type="evidence" value="ECO:0000250"/>
    <property type="project" value="UniProtKB"/>
</dbReference>
<dbReference type="GO" id="GO:0004842">
    <property type="term" value="F:ubiquitin-protein transferase activity"/>
    <property type="evidence" value="ECO:0000250"/>
    <property type="project" value="UniProtKB"/>
</dbReference>
<dbReference type="GO" id="GO:0008270">
    <property type="term" value="F:zinc ion binding"/>
    <property type="evidence" value="ECO:0007669"/>
    <property type="project" value="UniProtKB-KW"/>
</dbReference>
<dbReference type="GO" id="GO:0008543">
    <property type="term" value="P:fibroblast growth factor receptor signaling pathway"/>
    <property type="evidence" value="ECO:0000250"/>
    <property type="project" value="UniProtKB"/>
</dbReference>
<dbReference type="GO" id="GO:0000082">
    <property type="term" value="P:G1/S transition of mitotic cell cycle"/>
    <property type="evidence" value="ECO:0000250"/>
    <property type="project" value="UniProtKB"/>
</dbReference>
<dbReference type="GO" id="GO:0035278">
    <property type="term" value="P:miRNA-mediated gene silencing by inhibition of translation"/>
    <property type="evidence" value="ECO:0000250"/>
    <property type="project" value="UniProtKB"/>
</dbReference>
<dbReference type="GO" id="GO:0021915">
    <property type="term" value="P:neural tube development"/>
    <property type="evidence" value="ECO:0000250"/>
    <property type="project" value="UniProtKB"/>
</dbReference>
<dbReference type="GO" id="GO:0051865">
    <property type="term" value="P:protein autoubiquitination"/>
    <property type="evidence" value="ECO:0000250"/>
    <property type="project" value="UniProtKB"/>
</dbReference>
<dbReference type="GO" id="GO:2000177">
    <property type="term" value="P:regulation of neural precursor cell proliferation"/>
    <property type="evidence" value="ECO:0000250"/>
    <property type="project" value="UniProtKB"/>
</dbReference>
<dbReference type="GO" id="GO:0072089">
    <property type="term" value="P:stem cell proliferation"/>
    <property type="evidence" value="ECO:0000250"/>
    <property type="project" value="UniProtKB"/>
</dbReference>
<dbReference type="CDD" id="cd19812">
    <property type="entry name" value="Bbox1_TRIM71_C-VII"/>
    <property type="match status" value="1"/>
</dbReference>
<dbReference type="CDD" id="cd19796">
    <property type="entry name" value="Bbox2_TRIM71_C-VII"/>
    <property type="match status" value="1"/>
</dbReference>
<dbReference type="CDD" id="cd14954">
    <property type="entry name" value="NHL_TRIM71_like"/>
    <property type="match status" value="1"/>
</dbReference>
<dbReference type="CDD" id="cd16589">
    <property type="entry name" value="RING-HC_TRIM71_C-VII"/>
    <property type="match status" value="1"/>
</dbReference>
<dbReference type="FunFam" id="2.120.10.30:FF:000013">
    <property type="entry name" value="E3 ubiquitin-protein ligase TRIM71"/>
    <property type="match status" value="1"/>
</dbReference>
<dbReference type="FunFam" id="2.120.10.30:FF:000025">
    <property type="entry name" value="E3 ubiquitin-protein ligase TRIM71"/>
    <property type="match status" value="1"/>
</dbReference>
<dbReference type="FunFam" id="2.120.10.30:FF:000080">
    <property type="entry name" value="E3 ubiquitin-protein ligase TRIM71"/>
    <property type="match status" value="1"/>
</dbReference>
<dbReference type="FunFam" id="2.60.40.10:FF:000527">
    <property type="entry name" value="E3 ubiquitin-protein ligase TRIM71"/>
    <property type="match status" value="1"/>
</dbReference>
<dbReference type="FunFam" id="3.30.160.60:FF:000923">
    <property type="entry name" value="E3 ubiquitin-protein ligase TRIM71"/>
    <property type="match status" value="1"/>
</dbReference>
<dbReference type="Gene3D" id="4.10.830.40">
    <property type="match status" value="1"/>
</dbReference>
<dbReference type="Gene3D" id="3.30.160.60">
    <property type="entry name" value="Classic Zinc Finger"/>
    <property type="match status" value="1"/>
</dbReference>
<dbReference type="Gene3D" id="2.60.40.10">
    <property type="entry name" value="Immunoglobulins"/>
    <property type="match status" value="1"/>
</dbReference>
<dbReference type="Gene3D" id="2.120.10.30">
    <property type="entry name" value="TolB, C-terminal domain"/>
    <property type="match status" value="2"/>
</dbReference>
<dbReference type="Gene3D" id="3.30.40.10">
    <property type="entry name" value="Zinc/RING finger domain, C3HC4 (zinc finger)"/>
    <property type="match status" value="1"/>
</dbReference>
<dbReference type="InterPro" id="IPR011042">
    <property type="entry name" value="6-blade_b-propeller_TolB-like"/>
</dbReference>
<dbReference type="InterPro" id="IPR017868">
    <property type="entry name" value="Filamin/ABP280_repeat-like"/>
</dbReference>
<dbReference type="InterPro" id="IPR001298">
    <property type="entry name" value="Filamin/ABP280_rpt"/>
</dbReference>
<dbReference type="InterPro" id="IPR013783">
    <property type="entry name" value="Ig-like_fold"/>
</dbReference>
<dbReference type="InterPro" id="IPR014756">
    <property type="entry name" value="Ig_E-set"/>
</dbReference>
<dbReference type="InterPro" id="IPR001258">
    <property type="entry name" value="NHL_repeat"/>
</dbReference>
<dbReference type="InterPro" id="IPR050952">
    <property type="entry name" value="TRIM-NHL_E3_ligases"/>
</dbReference>
<dbReference type="InterPro" id="IPR000315">
    <property type="entry name" value="Znf_B-box"/>
</dbReference>
<dbReference type="InterPro" id="IPR018957">
    <property type="entry name" value="Znf_C3HC4_RING-type"/>
</dbReference>
<dbReference type="InterPro" id="IPR001841">
    <property type="entry name" value="Znf_RING"/>
</dbReference>
<dbReference type="InterPro" id="IPR013083">
    <property type="entry name" value="Znf_RING/FYVE/PHD"/>
</dbReference>
<dbReference type="InterPro" id="IPR017907">
    <property type="entry name" value="Znf_RING_CS"/>
</dbReference>
<dbReference type="PANTHER" id="PTHR24104">
    <property type="entry name" value="E3 UBIQUITIN-PROTEIN LIGASE NHLRC1-RELATED"/>
    <property type="match status" value="1"/>
</dbReference>
<dbReference type="PANTHER" id="PTHR24104:SF25">
    <property type="entry name" value="PROTEIN LIN-41"/>
    <property type="match status" value="1"/>
</dbReference>
<dbReference type="Pfam" id="PF00630">
    <property type="entry name" value="Filamin"/>
    <property type="match status" value="1"/>
</dbReference>
<dbReference type="Pfam" id="PF01436">
    <property type="entry name" value="NHL"/>
    <property type="match status" value="6"/>
</dbReference>
<dbReference type="Pfam" id="PF00643">
    <property type="entry name" value="zf-B_box"/>
    <property type="match status" value="1"/>
</dbReference>
<dbReference type="Pfam" id="PF00097">
    <property type="entry name" value="zf-C3HC4"/>
    <property type="match status" value="1"/>
</dbReference>
<dbReference type="SMART" id="SM00336">
    <property type="entry name" value="BBOX"/>
    <property type="match status" value="2"/>
</dbReference>
<dbReference type="SMART" id="SM00557">
    <property type="entry name" value="IG_FLMN"/>
    <property type="match status" value="1"/>
</dbReference>
<dbReference type="SMART" id="SM00184">
    <property type="entry name" value="RING"/>
    <property type="match status" value="1"/>
</dbReference>
<dbReference type="SUPFAM" id="SSF57845">
    <property type="entry name" value="B-box zinc-binding domain"/>
    <property type="match status" value="1"/>
</dbReference>
<dbReference type="SUPFAM" id="SSF81296">
    <property type="entry name" value="E set domains"/>
    <property type="match status" value="1"/>
</dbReference>
<dbReference type="SUPFAM" id="SSF101898">
    <property type="entry name" value="NHL repeat"/>
    <property type="match status" value="1"/>
</dbReference>
<dbReference type="SUPFAM" id="SSF57850">
    <property type="entry name" value="RING/U-box"/>
    <property type="match status" value="1"/>
</dbReference>
<dbReference type="PROSITE" id="PS50194">
    <property type="entry name" value="FILAMIN_REPEAT"/>
    <property type="match status" value="1"/>
</dbReference>
<dbReference type="PROSITE" id="PS51125">
    <property type="entry name" value="NHL"/>
    <property type="match status" value="6"/>
</dbReference>
<dbReference type="PROSITE" id="PS50119">
    <property type="entry name" value="ZF_BBOX"/>
    <property type="match status" value="2"/>
</dbReference>
<dbReference type="PROSITE" id="PS00518">
    <property type="entry name" value="ZF_RING_1"/>
    <property type="match status" value="1"/>
</dbReference>
<dbReference type="PROSITE" id="PS50089">
    <property type="entry name" value="ZF_RING_2"/>
    <property type="match status" value="1"/>
</dbReference>
<feature type="chain" id="PRO_0000420481" description="E3 ubiquitin-protein ligase TRIM71">
    <location>
        <begin position="1"/>
        <end position="814"/>
    </location>
</feature>
<feature type="repeat" description="Filamin">
    <location>
        <begin position="425"/>
        <end position="526"/>
    </location>
</feature>
<feature type="repeat" description="NHL 1">
    <location>
        <begin position="539"/>
        <end position="582"/>
    </location>
</feature>
<feature type="repeat" description="NHL 2">
    <location>
        <begin position="586"/>
        <end position="629"/>
    </location>
</feature>
<feature type="repeat" description="NHL 3">
    <location>
        <begin position="633"/>
        <end position="676"/>
    </location>
</feature>
<feature type="repeat" description="NHL 4">
    <location>
        <begin position="680"/>
        <end position="723"/>
    </location>
</feature>
<feature type="repeat" description="NHL 5">
    <location>
        <begin position="727"/>
        <end position="770"/>
    </location>
</feature>
<feature type="repeat" description="NHL 6">
    <location>
        <begin position="774"/>
        <end position="814"/>
    </location>
</feature>
<feature type="zinc finger region" description="RING-type" evidence="5">
    <location>
        <begin position="12"/>
        <end position="76"/>
    </location>
</feature>
<feature type="zinc finger region" description="B box-type 1; atypical" evidence="4">
    <location>
        <begin position="142"/>
        <end position="189"/>
    </location>
</feature>
<feature type="zinc finger region" description="B box-type 2" evidence="4">
    <location>
        <begin position="219"/>
        <end position="260"/>
    </location>
</feature>
<feature type="region of interest" description="Disordered" evidence="6">
    <location>
        <begin position="111"/>
        <end position="146"/>
    </location>
</feature>
<feature type="coiled-coil region" evidence="3">
    <location>
        <begin position="282"/>
        <end position="370"/>
    </location>
</feature>
<feature type="compositionally biased region" description="Low complexity" evidence="6">
    <location>
        <begin position="120"/>
        <end position="138"/>
    </location>
</feature>
<feature type="binding site" evidence="4">
    <location>
        <position position="147"/>
    </location>
    <ligand>
        <name>Zn(2+)</name>
        <dbReference type="ChEBI" id="CHEBI:29105"/>
        <label>1</label>
    </ligand>
</feature>
<feature type="binding site" evidence="4">
    <location>
        <position position="150"/>
    </location>
    <ligand>
        <name>Zn(2+)</name>
        <dbReference type="ChEBI" id="CHEBI:29105"/>
        <label>1</label>
    </ligand>
</feature>
<feature type="binding site" evidence="4">
    <location>
        <position position="171"/>
    </location>
    <ligand>
        <name>Zn(2+)</name>
        <dbReference type="ChEBI" id="CHEBI:29105"/>
        <label>1</label>
    </ligand>
</feature>
<feature type="binding site" evidence="4">
    <location>
        <position position="175"/>
    </location>
    <ligand>
        <name>Zn(2+)</name>
        <dbReference type="ChEBI" id="CHEBI:29105"/>
        <label>1</label>
    </ligand>
</feature>
<feature type="binding site" evidence="4">
    <location>
        <position position="224"/>
    </location>
    <ligand>
        <name>Zn(2+)</name>
        <dbReference type="ChEBI" id="CHEBI:29105"/>
        <label>2</label>
    </ligand>
</feature>
<feature type="binding site" evidence="4">
    <location>
        <position position="227"/>
    </location>
    <ligand>
        <name>Zn(2+)</name>
        <dbReference type="ChEBI" id="CHEBI:29105"/>
        <label>2</label>
    </ligand>
</feature>
<feature type="binding site" evidence="4">
    <location>
        <position position="247"/>
    </location>
    <ligand>
        <name>Zn(2+)</name>
        <dbReference type="ChEBI" id="CHEBI:29105"/>
        <label>2</label>
    </ligand>
</feature>
<feature type="binding site" evidence="4">
    <location>
        <position position="252"/>
    </location>
    <ligand>
        <name>Zn(2+)</name>
        <dbReference type="ChEBI" id="CHEBI:29105"/>
        <label>2</label>
    </ligand>
</feature>
<keyword id="KW-0175">Coiled coil</keyword>
<keyword id="KW-0963">Cytoplasm</keyword>
<keyword id="KW-0217">Developmental protein</keyword>
<keyword id="KW-0479">Metal-binding</keyword>
<keyword id="KW-1185">Reference proteome</keyword>
<keyword id="KW-0677">Repeat</keyword>
<keyword id="KW-0694">RNA-binding</keyword>
<keyword id="KW-0943">RNA-mediated gene silencing</keyword>
<keyword id="KW-0808">Transferase</keyword>
<keyword id="KW-0833">Ubl conjugation pathway</keyword>
<keyword id="KW-0862">Zinc</keyword>
<keyword id="KW-0863">Zinc-finger</keyword>
<accession>F6QEU4</accession>
<organism>
    <name type="scientific">Xenopus tropicalis</name>
    <name type="common">Western clawed frog</name>
    <name type="synonym">Silurana tropicalis</name>
    <dbReference type="NCBI Taxonomy" id="8364"/>
    <lineage>
        <taxon>Eukaryota</taxon>
        <taxon>Metazoa</taxon>
        <taxon>Chordata</taxon>
        <taxon>Craniata</taxon>
        <taxon>Vertebrata</taxon>
        <taxon>Euteleostomi</taxon>
        <taxon>Amphibia</taxon>
        <taxon>Batrachia</taxon>
        <taxon>Anura</taxon>
        <taxon>Pipoidea</taxon>
        <taxon>Pipidae</taxon>
        <taxon>Xenopodinae</taxon>
        <taxon>Xenopus</taxon>
        <taxon>Silurana</taxon>
    </lineage>
</organism>
<sequence length="814" mass="88889">MASFPESDFQLCPLCKEMCVSTSSSSAGSAGGGTGLASAPPRRLHVLPCLHAFCRQCLEGRRSPGDSLQLRCPVCDHKVLISEAGMDALPSSTFLHLSNLLDAVVGAADEQQQSNGGRTASNRQRSASCSSSGLLRRAPPSQSEPRCSSCDDGNGASSHCLDCQENLCDNCLRAHQRVRLTKDHFIERFPASPCSSAASSAATTSSSSSSAFSLLPVYPERLYCQQHDEEVLHFYCDSCSVPICRECTMGRHAGHSFVYLQEALQDSRALTIQLLADAQQGRQAIQLSLEQAQALAEQVEMKAKVVQSEIKAVTSRHKKALEERECELLWKVEKIRQVKAKSLYHQVEKLHQALNKLDSTINAVQQVLEEGCTMDILIARDRVLAQVQDVKNARGLLQLQEDDRIMFTPPDQALYLAIKSLGLVSSGAFAALTKATGEGLKRALQGKVASFTVIGYDHDGEARLSGGDLITVLVMGPDGNLFAAEVSDQLNGTYLVSYRPQLEGEHLISVMVCNQHIENSPFKVNVKSGRCYLGIGLPTLSFGGEGDHDGKLCRPWGVCVDREGYIIVADRSNNRVQIFKPCGTFHHKFGSLGSRPGQFDRPAGVACDNSRRIVVADKDNHRVQIFTFEGQFLLKFGEKGTKNGQFNYPWDVAVNSEGKILVSDTRNHRVQLFGPDGTFLNKYGFEGALWKHFDSPRGVAFSQDGYLVVTDFNNHRLLIIKPDCQSAHFLGTEGTGNGQFLRPQGVAVDQEGRIIVADSRNHRVQIFEPNGSFLCKFGTQGSGFGQMDRPSGIAVTPDGTIVVVDFGNNRILAF</sequence>
<name>LIN41_XENTR</name>
<reference key="1">
    <citation type="journal article" date="2010" name="Science">
        <title>The genome of the Western clawed frog Xenopus tropicalis.</title>
        <authorList>
            <person name="Hellsten U."/>
            <person name="Harland R.M."/>
            <person name="Gilchrist M.J."/>
            <person name="Hendrix D."/>
            <person name="Jurka J."/>
            <person name="Kapitonov V."/>
            <person name="Ovcharenko I."/>
            <person name="Putnam N.H."/>
            <person name="Shu S."/>
            <person name="Taher L."/>
            <person name="Blitz I.L."/>
            <person name="Blumberg B."/>
            <person name="Dichmann D.S."/>
            <person name="Dubchak I."/>
            <person name="Amaya E."/>
            <person name="Detter J.C."/>
            <person name="Fletcher R."/>
            <person name="Gerhard D.S."/>
            <person name="Goodstein D."/>
            <person name="Graves T."/>
            <person name="Grigoriev I.V."/>
            <person name="Grimwood J."/>
            <person name="Kawashima T."/>
            <person name="Lindquist E."/>
            <person name="Lucas S.M."/>
            <person name="Mead P.E."/>
            <person name="Mitros T."/>
            <person name="Ogino H."/>
            <person name="Ohta Y."/>
            <person name="Poliakov A.V."/>
            <person name="Pollet N."/>
            <person name="Robert J."/>
            <person name="Salamov A."/>
            <person name="Sater A.K."/>
            <person name="Schmutz J."/>
            <person name="Terry A."/>
            <person name="Vize P.D."/>
            <person name="Warren W.C."/>
            <person name="Wells D."/>
            <person name="Wills A."/>
            <person name="Wilson R.K."/>
            <person name="Zimmerman L.B."/>
            <person name="Zorn A.M."/>
            <person name="Grainger R."/>
            <person name="Grammer T."/>
            <person name="Khokha M.K."/>
            <person name="Richardson P.M."/>
            <person name="Rokhsar D.S."/>
        </authorList>
    </citation>
    <scope>NUCLEOTIDE SEQUENCE [LARGE SCALE GENOMIC DNA]</scope>
</reference>
<proteinExistence type="inferred from homology"/>
<protein>
    <recommendedName>
        <fullName>E3 ubiquitin-protein ligase TRIM71</fullName>
        <ecNumber>2.3.2.27</ecNumber>
    </recommendedName>
    <alternativeName>
        <fullName>Protein lin-41 homolog</fullName>
    </alternativeName>
    <alternativeName>
        <fullName evidence="7">RING-type E3 ubiquitin transferase TRIM71</fullName>
    </alternativeName>
    <alternativeName>
        <fullName>Tripartite motif-containing protein 71</fullName>
    </alternativeName>
</protein>